<name>LPXA_ECOSM</name>
<sequence>MIDKSAFVHPTAIVEEGASIGANAHIGPFCIVGPHVEIGEGTVLKSHVVVNGHTKIGRDNEIYQFASIGEVNQDLKYAGEPTRVEIGDRNRIRESVTIHRGTVQGGGLTKVGSDNLLMINAHIAHDCTVGNRCILANNATLAGHVSVDDFAIIGGMTAVHQFCIIGAHVMVGGCSGVAQDVPPYVIAQGNHATPFGVNIEGLKRRGFSREAITAIRNAYKLIYRSGKTLDEVKPEIAELAETYPEVKAFTDFFARSTRGLIR</sequence>
<keyword id="KW-0012">Acyltransferase</keyword>
<keyword id="KW-0963">Cytoplasm</keyword>
<keyword id="KW-0441">Lipid A biosynthesis</keyword>
<keyword id="KW-0444">Lipid biosynthesis</keyword>
<keyword id="KW-0443">Lipid metabolism</keyword>
<keyword id="KW-0677">Repeat</keyword>
<keyword id="KW-0808">Transferase</keyword>
<organism>
    <name type="scientific">Escherichia coli (strain SMS-3-5 / SECEC)</name>
    <dbReference type="NCBI Taxonomy" id="439855"/>
    <lineage>
        <taxon>Bacteria</taxon>
        <taxon>Pseudomonadati</taxon>
        <taxon>Pseudomonadota</taxon>
        <taxon>Gammaproteobacteria</taxon>
        <taxon>Enterobacterales</taxon>
        <taxon>Enterobacteriaceae</taxon>
        <taxon>Escherichia</taxon>
    </lineage>
</organism>
<protein>
    <recommendedName>
        <fullName evidence="1">Acyl-[acyl-carrier-protein]--UDP-N-acetylglucosamine O-acyltransferase</fullName>
        <shortName evidence="1">UDP-N-acetylglucosamine acyltransferase</shortName>
        <ecNumber evidence="1">2.3.1.129</ecNumber>
    </recommendedName>
</protein>
<proteinExistence type="inferred from homology"/>
<dbReference type="EC" id="2.3.1.129" evidence="1"/>
<dbReference type="EMBL" id="CP000970">
    <property type="protein sequence ID" value="ACB15842.1"/>
    <property type="molecule type" value="Genomic_DNA"/>
</dbReference>
<dbReference type="RefSeq" id="WP_000565966.1">
    <property type="nucleotide sequence ID" value="NC_010498.1"/>
</dbReference>
<dbReference type="SMR" id="B1LGY3"/>
<dbReference type="GeneID" id="93777244"/>
<dbReference type="KEGG" id="ecm:EcSMS35_0192"/>
<dbReference type="HOGENOM" id="CLU_061249_0_0_6"/>
<dbReference type="UniPathway" id="UPA00359">
    <property type="reaction ID" value="UER00477"/>
</dbReference>
<dbReference type="Proteomes" id="UP000007011">
    <property type="component" value="Chromosome"/>
</dbReference>
<dbReference type="GO" id="GO:0005737">
    <property type="term" value="C:cytoplasm"/>
    <property type="evidence" value="ECO:0007669"/>
    <property type="project" value="UniProtKB-SubCell"/>
</dbReference>
<dbReference type="GO" id="GO:0016020">
    <property type="term" value="C:membrane"/>
    <property type="evidence" value="ECO:0007669"/>
    <property type="project" value="GOC"/>
</dbReference>
<dbReference type="GO" id="GO:0008780">
    <property type="term" value="F:acyl-[acyl-carrier-protein]-UDP-N-acetylglucosamine O-acyltransferase activity"/>
    <property type="evidence" value="ECO:0007669"/>
    <property type="project" value="UniProtKB-UniRule"/>
</dbReference>
<dbReference type="GO" id="GO:0009245">
    <property type="term" value="P:lipid A biosynthetic process"/>
    <property type="evidence" value="ECO:0007669"/>
    <property type="project" value="UniProtKB-UniRule"/>
</dbReference>
<dbReference type="CDD" id="cd03351">
    <property type="entry name" value="LbH_UDP-GlcNAc_AT"/>
    <property type="match status" value="1"/>
</dbReference>
<dbReference type="FunFam" id="1.20.1180.10:FF:000001">
    <property type="entry name" value="Acyl-[acyl-carrier-protein]--UDP-N-acetylglucosamine O-acyltransferase"/>
    <property type="match status" value="1"/>
</dbReference>
<dbReference type="FunFam" id="2.160.10.10:FF:000003">
    <property type="entry name" value="Acyl-[acyl-carrier-protein]--UDP-N-acetylglucosamine O-acyltransferase"/>
    <property type="match status" value="1"/>
</dbReference>
<dbReference type="Gene3D" id="2.160.10.10">
    <property type="entry name" value="Hexapeptide repeat proteins"/>
    <property type="match status" value="1"/>
</dbReference>
<dbReference type="Gene3D" id="1.20.1180.10">
    <property type="entry name" value="Udp N-acetylglucosamine O-acyltransferase, C-terminal domain"/>
    <property type="match status" value="1"/>
</dbReference>
<dbReference type="HAMAP" id="MF_00387">
    <property type="entry name" value="LpxA"/>
    <property type="match status" value="1"/>
</dbReference>
<dbReference type="InterPro" id="IPR029098">
    <property type="entry name" value="Acetyltransf_C"/>
</dbReference>
<dbReference type="InterPro" id="IPR037157">
    <property type="entry name" value="Acetyltransf_C_sf"/>
</dbReference>
<dbReference type="InterPro" id="IPR001451">
    <property type="entry name" value="Hexapep"/>
</dbReference>
<dbReference type="InterPro" id="IPR018357">
    <property type="entry name" value="Hexapep_transf_CS"/>
</dbReference>
<dbReference type="InterPro" id="IPR010137">
    <property type="entry name" value="Lipid_A_LpxA"/>
</dbReference>
<dbReference type="InterPro" id="IPR011004">
    <property type="entry name" value="Trimer_LpxA-like_sf"/>
</dbReference>
<dbReference type="NCBIfam" id="TIGR01852">
    <property type="entry name" value="lipid_A_lpxA"/>
    <property type="match status" value="1"/>
</dbReference>
<dbReference type="NCBIfam" id="NF003657">
    <property type="entry name" value="PRK05289.1"/>
    <property type="match status" value="1"/>
</dbReference>
<dbReference type="PANTHER" id="PTHR43480">
    <property type="entry name" value="ACYL-[ACYL-CARRIER-PROTEIN]--UDP-N-ACETYLGLUCOSAMINE O-ACYLTRANSFERASE"/>
    <property type="match status" value="1"/>
</dbReference>
<dbReference type="PANTHER" id="PTHR43480:SF1">
    <property type="entry name" value="ACYL-[ACYL-CARRIER-PROTEIN]--UDP-N-ACETYLGLUCOSAMINE O-ACYLTRANSFERASE, MITOCHONDRIAL-RELATED"/>
    <property type="match status" value="1"/>
</dbReference>
<dbReference type="Pfam" id="PF13720">
    <property type="entry name" value="Acetyltransf_11"/>
    <property type="match status" value="1"/>
</dbReference>
<dbReference type="Pfam" id="PF00132">
    <property type="entry name" value="Hexapep"/>
    <property type="match status" value="2"/>
</dbReference>
<dbReference type="PIRSF" id="PIRSF000456">
    <property type="entry name" value="UDP-GlcNAc_acltr"/>
    <property type="match status" value="1"/>
</dbReference>
<dbReference type="SUPFAM" id="SSF51161">
    <property type="entry name" value="Trimeric LpxA-like enzymes"/>
    <property type="match status" value="1"/>
</dbReference>
<dbReference type="PROSITE" id="PS00101">
    <property type="entry name" value="HEXAPEP_TRANSFERASES"/>
    <property type="match status" value="2"/>
</dbReference>
<reference key="1">
    <citation type="journal article" date="2008" name="J. Bacteriol.">
        <title>Insights into the environmental resistance gene pool from the genome sequence of the multidrug-resistant environmental isolate Escherichia coli SMS-3-5.</title>
        <authorList>
            <person name="Fricke W.F."/>
            <person name="Wright M.S."/>
            <person name="Lindell A.H."/>
            <person name="Harkins D.M."/>
            <person name="Baker-Austin C."/>
            <person name="Ravel J."/>
            <person name="Stepanauskas R."/>
        </authorList>
    </citation>
    <scope>NUCLEOTIDE SEQUENCE [LARGE SCALE GENOMIC DNA]</scope>
    <source>
        <strain>SMS-3-5 / SECEC</strain>
    </source>
</reference>
<feature type="chain" id="PRO_1000122707" description="Acyl-[acyl-carrier-protein]--UDP-N-acetylglucosamine O-acyltransferase">
    <location>
        <begin position="1"/>
        <end position="262"/>
    </location>
</feature>
<gene>
    <name evidence="1" type="primary">lpxA</name>
    <name type="ordered locus">EcSMS35_0192</name>
</gene>
<accession>B1LGY3</accession>
<evidence type="ECO:0000255" key="1">
    <source>
        <dbReference type="HAMAP-Rule" id="MF_00387"/>
    </source>
</evidence>
<comment type="function">
    <text evidence="1">Involved in the biosynthesis of lipid A, a phosphorylated glycolipid that anchors the lipopolysaccharide to the outer membrane of the cell.</text>
</comment>
<comment type="catalytic activity">
    <reaction evidence="1">
        <text>a (3R)-hydroxyacyl-[ACP] + UDP-N-acetyl-alpha-D-glucosamine = a UDP-3-O-[(3R)-3-hydroxyacyl]-N-acetyl-alpha-D-glucosamine + holo-[ACP]</text>
        <dbReference type="Rhea" id="RHEA:67812"/>
        <dbReference type="Rhea" id="RHEA-COMP:9685"/>
        <dbReference type="Rhea" id="RHEA-COMP:9945"/>
        <dbReference type="ChEBI" id="CHEBI:57705"/>
        <dbReference type="ChEBI" id="CHEBI:64479"/>
        <dbReference type="ChEBI" id="CHEBI:78827"/>
        <dbReference type="ChEBI" id="CHEBI:173225"/>
        <dbReference type="EC" id="2.3.1.129"/>
    </reaction>
</comment>
<comment type="pathway">
    <text evidence="1">Glycolipid biosynthesis; lipid IV(A) biosynthesis; lipid IV(A) from (3R)-3-hydroxytetradecanoyl-[acyl-carrier-protein] and UDP-N-acetyl-alpha-D-glucosamine: step 1/6.</text>
</comment>
<comment type="subunit">
    <text evidence="1">Homotrimer.</text>
</comment>
<comment type="subcellular location">
    <subcellularLocation>
        <location evidence="1">Cytoplasm</location>
    </subcellularLocation>
</comment>
<comment type="similarity">
    <text evidence="1">Belongs to the transferase hexapeptide repeat family. LpxA subfamily.</text>
</comment>